<reference key="1">
    <citation type="submission" date="2007-07" db="EMBL/GenBank/DDBJ databases">
        <title>Complete sequence of chromosome of Shewanella baltica OS185.</title>
        <authorList>
            <consortium name="US DOE Joint Genome Institute"/>
            <person name="Copeland A."/>
            <person name="Lucas S."/>
            <person name="Lapidus A."/>
            <person name="Barry K."/>
            <person name="Glavina del Rio T."/>
            <person name="Dalin E."/>
            <person name="Tice H."/>
            <person name="Pitluck S."/>
            <person name="Sims D."/>
            <person name="Brettin T."/>
            <person name="Bruce D."/>
            <person name="Detter J.C."/>
            <person name="Han C."/>
            <person name="Schmutz J."/>
            <person name="Larimer F."/>
            <person name="Land M."/>
            <person name="Hauser L."/>
            <person name="Kyrpides N."/>
            <person name="Mikhailova N."/>
            <person name="Brettar I."/>
            <person name="Rodrigues J."/>
            <person name="Konstantinidis K."/>
            <person name="Tiedje J."/>
            <person name="Richardson P."/>
        </authorList>
    </citation>
    <scope>NUCLEOTIDE SEQUENCE [LARGE SCALE GENOMIC DNA]</scope>
    <source>
        <strain>OS185</strain>
    </source>
</reference>
<protein>
    <recommendedName>
        <fullName evidence="1">UPF0250 protein Shew185_3322</fullName>
    </recommendedName>
</protein>
<organism>
    <name type="scientific">Shewanella baltica (strain OS185)</name>
    <dbReference type="NCBI Taxonomy" id="402882"/>
    <lineage>
        <taxon>Bacteria</taxon>
        <taxon>Pseudomonadati</taxon>
        <taxon>Pseudomonadota</taxon>
        <taxon>Gammaproteobacteria</taxon>
        <taxon>Alteromonadales</taxon>
        <taxon>Shewanellaceae</taxon>
        <taxon>Shewanella</taxon>
    </lineage>
</organism>
<sequence length="88" mass="9768">MLDTKFDELMDFPCAFPFKVVGEAHETLTDKVVAVVQKHAPGDYSPSTKTSSKGSYHSITIRVTVTSKDHIEILYTELAAIEGVRRVL</sequence>
<evidence type="ECO:0000255" key="1">
    <source>
        <dbReference type="HAMAP-Rule" id="MF_00659"/>
    </source>
</evidence>
<gene>
    <name type="ordered locus">Shew185_3322</name>
</gene>
<feature type="chain" id="PRO_1000061891" description="UPF0250 protein Shew185_3322">
    <location>
        <begin position="1"/>
        <end position="88"/>
    </location>
</feature>
<dbReference type="EMBL" id="CP000753">
    <property type="protein sequence ID" value="ABS09449.1"/>
    <property type="molecule type" value="Genomic_DNA"/>
</dbReference>
<dbReference type="SMR" id="A6WRL0"/>
<dbReference type="KEGG" id="sbm:Shew185_3322"/>
<dbReference type="HOGENOM" id="CLU_161438_2_1_6"/>
<dbReference type="GO" id="GO:0005829">
    <property type="term" value="C:cytosol"/>
    <property type="evidence" value="ECO:0007669"/>
    <property type="project" value="TreeGrafter"/>
</dbReference>
<dbReference type="Gene3D" id="3.30.70.260">
    <property type="match status" value="1"/>
</dbReference>
<dbReference type="HAMAP" id="MF_00659">
    <property type="entry name" value="UPF0250"/>
    <property type="match status" value="1"/>
</dbReference>
<dbReference type="InterPro" id="IPR007454">
    <property type="entry name" value="UPF0250_YbeD-like"/>
</dbReference>
<dbReference type="InterPro" id="IPR027471">
    <property type="entry name" value="YbeD-like_sf"/>
</dbReference>
<dbReference type="NCBIfam" id="NF003447">
    <property type="entry name" value="PRK04998.1"/>
    <property type="match status" value="1"/>
</dbReference>
<dbReference type="PANTHER" id="PTHR38036">
    <property type="entry name" value="UPF0250 PROTEIN YBED"/>
    <property type="match status" value="1"/>
</dbReference>
<dbReference type="PANTHER" id="PTHR38036:SF1">
    <property type="entry name" value="UPF0250 PROTEIN YBED"/>
    <property type="match status" value="1"/>
</dbReference>
<dbReference type="Pfam" id="PF04359">
    <property type="entry name" value="DUF493"/>
    <property type="match status" value="1"/>
</dbReference>
<dbReference type="SUPFAM" id="SSF117991">
    <property type="entry name" value="YbeD/HP0495-like"/>
    <property type="match status" value="1"/>
</dbReference>
<proteinExistence type="inferred from homology"/>
<accession>A6WRL0</accession>
<name>Y3322_SHEB8</name>
<comment type="similarity">
    <text evidence="1">Belongs to the UPF0250 family.</text>
</comment>